<accession>Q4V321</accession>
<accession>A0A087X111</accession>
<keyword id="KW-1185">Reference proteome</keyword>
<dbReference type="EMBL" id="AC233302">
    <property type="status" value="NOT_ANNOTATED_CDS"/>
    <property type="molecule type" value="Genomic_DNA"/>
</dbReference>
<dbReference type="EMBL" id="BX649339">
    <property type="protein sequence ID" value="CAI95426.1"/>
    <property type="molecule type" value="Genomic_DNA"/>
</dbReference>
<dbReference type="EMBL" id="AF235097">
    <property type="protein sequence ID" value="CAI95426.1"/>
    <property type="status" value="JOINED"/>
    <property type="molecule type" value="Genomic_DNA"/>
</dbReference>
<dbReference type="CCDS" id="CCDS48110.1"/>
<dbReference type="RefSeq" id="NP_001091882.2">
    <property type="nucleotide sequence ID" value="NM_001098412.4"/>
</dbReference>
<dbReference type="STRING" id="9606.ENSP00000483811"/>
<dbReference type="BioMuta" id="GAGE13"/>
<dbReference type="DMDM" id="74753563"/>
<dbReference type="jPOST" id="Q4V321"/>
<dbReference type="MassIVE" id="Q4V321"/>
<dbReference type="PaxDb" id="9606-ENSP00000483811"/>
<dbReference type="PeptideAtlas" id="Q4V321"/>
<dbReference type="Pumba" id="Q4V321"/>
<dbReference type="Antibodypedia" id="72467">
    <property type="antibodies" value="33 antibodies from 7 providers"/>
</dbReference>
<dbReference type="DNASU" id="645051"/>
<dbReference type="Ensembl" id="ENST00000612958.2">
    <property type="protein sequence ID" value="ENSP00000483811.1"/>
    <property type="gene ID" value="ENSG00000274274.2"/>
</dbReference>
<dbReference type="GeneID" id="645051"/>
<dbReference type="KEGG" id="hsa:645051"/>
<dbReference type="MANE-Select" id="ENST00000612958.2">
    <property type="protein sequence ID" value="ENSP00000483811.1"/>
    <property type="RefSeq nucleotide sequence ID" value="NM_001098412.4"/>
    <property type="RefSeq protein sequence ID" value="NP_001091882.2"/>
</dbReference>
<dbReference type="AGR" id="HGNC:29081"/>
<dbReference type="CTD" id="645051"/>
<dbReference type="GeneCards" id="GAGE13"/>
<dbReference type="HGNC" id="HGNC:29081">
    <property type="gene designation" value="GAGE13"/>
</dbReference>
<dbReference type="HPA" id="ENSG00000274274">
    <property type="expression patterns" value="Tissue enriched (testis)"/>
</dbReference>
<dbReference type="MIM" id="300734">
    <property type="type" value="gene"/>
</dbReference>
<dbReference type="neXtProt" id="NX_Q4V321"/>
<dbReference type="OpenTargets" id="ENSG00000274274"/>
<dbReference type="VEuPathDB" id="HostDB:ENSG00000274274"/>
<dbReference type="GeneTree" id="ENSGT00940000153097"/>
<dbReference type="InParanoid" id="Q4V321"/>
<dbReference type="OrthoDB" id="9539459at2759"/>
<dbReference type="PAN-GO" id="Q4V321">
    <property type="GO annotations" value="0 GO annotations based on evolutionary models"/>
</dbReference>
<dbReference type="PhylomeDB" id="Q4V321"/>
<dbReference type="TreeFam" id="TF340669"/>
<dbReference type="PathwayCommons" id="Q4V321"/>
<dbReference type="BioGRID-ORCS" id="645051">
    <property type="hits" value="2 hits in 69 CRISPR screens"/>
</dbReference>
<dbReference type="ChiTaRS" id="GAGE13">
    <property type="organism name" value="human"/>
</dbReference>
<dbReference type="GenomeRNAi" id="645051"/>
<dbReference type="Pharos" id="Q4V321">
    <property type="development level" value="Tdark"/>
</dbReference>
<dbReference type="PRO" id="PR:Q4V321"/>
<dbReference type="Proteomes" id="UP000005640">
    <property type="component" value="Chromosome X"/>
</dbReference>
<dbReference type="RNAct" id="Q4V321">
    <property type="molecule type" value="protein"/>
</dbReference>
<dbReference type="Bgee" id="ENSG00000274274">
    <property type="expression patterns" value="Expressed in primordial germ cell in gonad and 70 other cell types or tissues"/>
</dbReference>
<dbReference type="InterPro" id="IPR031320">
    <property type="entry name" value="GAGE"/>
</dbReference>
<dbReference type="InterPro" id="IPR008625">
    <property type="entry name" value="GAGE_fam"/>
</dbReference>
<dbReference type="PANTHER" id="PTHR14047:SF30">
    <property type="entry name" value="G ANTIGEN 1-RELATED"/>
    <property type="match status" value="1"/>
</dbReference>
<dbReference type="PANTHER" id="PTHR14047">
    <property type="entry name" value="P ANTIGEN FAMILY MEMBER 5-RELATED"/>
    <property type="match status" value="1"/>
</dbReference>
<dbReference type="Pfam" id="PF05831">
    <property type="entry name" value="GAGE"/>
    <property type="match status" value="1"/>
</dbReference>
<dbReference type="SMART" id="SM01379">
    <property type="entry name" value="GAGE"/>
    <property type="match status" value="1"/>
</dbReference>
<evidence type="ECO:0000256" key="1">
    <source>
        <dbReference type="SAM" id="MobiDB-lite"/>
    </source>
</evidence>
<evidence type="ECO:0000305" key="2"/>
<evidence type="ECO:0000312" key="3">
    <source>
        <dbReference type="HGNC" id="HGNC:29081"/>
    </source>
</evidence>
<protein>
    <recommendedName>
        <fullName evidence="2">G antigen 13</fullName>
        <shortName>GAGE-13</shortName>
    </recommendedName>
    <alternativeName>
        <fullName>G antigen 12A</fullName>
        <shortName>GAGE-12A</shortName>
    </alternativeName>
</protein>
<organism>
    <name type="scientific">Homo sapiens</name>
    <name type="common">Human</name>
    <dbReference type="NCBI Taxonomy" id="9606"/>
    <lineage>
        <taxon>Eukaryota</taxon>
        <taxon>Metazoa</taxon>
        <taxon>Chordata</taxon>
        <taxon>Craniata</taxon>
        <taxon>Vertebrata</taxon>
        <taxon>Euteleostomi</taxon>
        <taxon>Mammalia</taxon>
        <taxon>Eutheria</taxon>
        <taxon>Euarchontoglires</taxon>
        <taxon>Primates</taxon>
        <taxon>Haplorrhini</taxon>
        <taxon>Catarrhini</taxon>
        <taxon>Hominidae</taxon>
        <taxon>Homo</taxon>
    </lineage>
</organism>
<feature type="chain" id="PRO_0000252476" description="G antigen 13">
    <location>
        <begin position="1"/>
        <end position="117"/>
    </location>
</feature>
<feature type="region of interest" description="Disordered" evidence="1">
    <location>
        <begin position="1"/>
        <end position="117"/>
    </location>
</feature>
<feature type="compositionally biased region" description="Acidic residues" evidence="1">
    <location>
        <begin position="32"/>
        <end position="45"/>
    </location>
</feature>
<feature type="compositionally biased region" description="Acidic residues" evidence="1">
    <location>
        <begin position="87"/>
        <end position="96"/>
    </location>
</feature>
<feature type="compositionally biased region" description="Basic and acidic residues" evidence="1">
    <location>
        <begin position="103"/>
        <end position="117"/>
    </location>
</feature>
<feature type="sequence conflict" description="In Ref. 1; CAI95426." evidence="2" ref="1">
    <original>W</original>
    <variation>R</variation>
    <location>
        <position position="11"/>
    </location>
</feature>
<feature type="sequence conflict" description="In Ref. 1; CAI95426." evidence="2" ref="1">
    <original>R</original>
    <variation>C</variation>
    <location>
        <position position="50"/>
    </location>
</feature>
<feature type="sequence conflict" description="In Ref. 1; CAI95426." evidence="2" ref="1">
    <original>E</original>
    <variation>K</variation>
    <location>
        <position position="112"/>
    </location>
</feature>
<gene>
    <name evidence="3" type="primary">GAGE13</name>
    <name type="synonym">GAGE12A</name>
</gene>
<name>GAG13_HUMAN</name>
<reference key="1">
    <citation type="journal article" date="2005" name="Nature">
        <title>The DNA sequence of the human X chromosome.</title>
        <authorList>
            <person name="Ross M.T."/>
            <person name="Grafham D.V."/>
            <person name="Coffey A.J."/>
            <person name="Scherer S."/>
            <person name="McLay K."/>
            <person name="Muzny D."/>
            <person name="Platzer M."/>
            <person name="Howell G.R."/>
            <person name="Burrows C."/>
            <person name="Bird C.P."/>
            <person name="Frankish A."/>
            <person name="Lovell F.L."/>
            <person name="Howe K.L."/>
            <person name="Ashurst J.L."/>
            <person name="Fulton R.S."/>
            <person name="Sudbrak R."/>
            <person name="Wen G."/>
            <person name="Jones M.C."/>
            <person name="Hurles M.E."/>
            <person name="Andrews T.D."/>
            <person name="Scott C.E."/>
            <person name="Searle S."/>
            <person name="Ramser J."/>
            <person name="Whittaker A."/>
            <person name="Deadman R."/>
            <person name="Carter N.P."/>
            <person name="Hunt S.E."/>
            <person name="Chen R."/>
            <person name="Cree A."/>
            <person name="Gunaratne P."/>
            <person name="Havlak P."/>
            <person name="Hodgson A."/>
            <person name="Metzker M.L."/>
            <person name="Richards S."/>
            <person name="Scott G."/>
            <person name="Steffen D."/>
            <person name="Sodergren E."/>
            <person name="Wheeler D.A."/>
            <person name="Worley K.C."/>
            <person name="Ainscough R."/>
            <person name="Ambrose K.D."/>
            <person name="Ansari-Lari M.A."/>
            <person name="Aradhya S."/>
            <person name="Ashwell R.I."/>
            <person name="Babbage A.K."/>
            <person name="Bagguley C.L."/>
            <person name="Ballabio A."/>
            <person name="Banerjee R."/>
            <person name="Barker G.E."/>
            <person name="Barlow K.F."/>
            <person name="Barrett I.P."/>
            <person name="Bates K.N."/>
            <person name="Beare D.M."/>
            <person name="Beasley H."/>
            <person name="Beasley O."/>
            <person name="Beck A."/>
            <person name="Bethel G."/>
            <person name="Blechschmidt K."/>
            <person name="Brady N."/>
            <person name="Bray-Allen S."/>
            <person name="Bridgeman A.M."/>
            <person name="Brown A.J."/>
            <person name="Brown M.J."/>
            <person name="Bonnin D."/>
            <person name="Bruford E.A."/>
            <person name="Buhay C."/>
            <person name="Burch P."/>
            <person name="Burford D."/>
            <person name="Burgess J."/>
            <person name="Burrill W."/>
            <person name="Burton J."/>
            <person name="Bye J.M."/>
            <person name="Carder C."/>
            <person name="Carrel L."/>
            <person name="Chako J."/>
            <person name="Chapman J.C."/>
            <person name="Chavez D."/>
            <person name="Chen E."/>
            <person name="Chen G."/>
            <person name="Chen Y."/>
            <person name="Chen Z."/>
            <person name="Chinault C."/>
            <person name="Ciccodicola A."/>
            <person name="Clark S.Y."/>
            <person name="Clarke G."/>
            <person name="Clee C.M."/>
            <person name="Clegg S."/>
            <person name="Clerc-Blankenburg K."/>
            <person name="Clifford K."/>
            <person name="Cobley V."/>
            <person name="Cole C.G."/>
            <person name="Conquer J.S."/>
            <person name="Corby N."/>
            <person name="Connor R.E."/>
            <person name="David R."/>
            <person name="Davies J."/>
            <person name="Davis C."/>
            <person name="Davis J."/>
            <person name="Delgado O."/>
            <person name="Deshazo D."/>
            <person name="Dhami P."/>
            <person name="Ding Y."/>
            <person name="Dinh H."/>
            <person name="Dodsworth S."/>
            <person name="Draper H."/>
            <person name="Dugan-Rocha S."/>
            <person name="Dunham A."/>
            <person name="Dunn M."/>
            <person name="Durbin K.J."/>
            <person name="Dutta I."/>
            <person name="Eades T."/>
            <person name="Ellwood M."/>
            <person name="Emery-Cohen A."/>
            <person name="Errington H."/>
            <person name="Evans K.L."/>
            <person name="Faulkner L."/>
            <person name="Francis F."/>
            <person name="Frankland J."/>
            <person name="Fraser A.E."/>
            <person name="Galgoczy P."/>
            <person name="Gilbert J."/>
            <person name="Gill R."/>
            <person name="Gloeckner G."/>
            <person name="Gregory S.G."/>
            <person name="Gribble S."/>
            <person name="Griffiths C."/>
            <person name="Grocock R."/>
            <person name="Gu Y."/>
            <person name="Gwilliam R."/>
            <person name="Hamilton C."/>
            <person name="Hart E.A."/>
            <person name="Hawes A."/>
            <person name="Heath P.D."/>
            <person name="Heitmann K."/>
            <person name="Hennig S."/>
            <person name="Hernandez J."/>
            <person name="Hinzmann B."/>
            <person name="Ho S."/>
            <person name="Hoffs M."/>
            <person name="Howden P.J."/>
            <person name="Huckle E.J."/>
            <person name="Hume J."/>
            <person name="Hunt P.J."/>
            <person name="Hunt A.R."/>
            <person name="Isherwood J."/>
            <person name="Jacob L."/>
            <person name="Johnson D."/>
            <person name="Jones S."/>
            <person name="de Jong P.J."/>
            <person name="Joseph S.S."/>
            <person name="Keenan S."/>
            <person name="Kelly S."/>
            <person name="Kershaw J.K."/>
            <person name="Khan Z."/>
            <person name="Kioschis P."/>
            <person name="Klages S."/>
            <person name="Knights A.J."/>
            <person name="Kosiura A."/>
            <person name="Kovar-Smith C."/>
            <person name="Laird G.K."/>
            <person name="Langford C."/>
            <person name="Lawlor S."/>
            <person name="Leversha M."/>
            <person name="Lewis L."/>
            <person name="Liu W."/>
            <person name="Lloyd C."/>
            <person name="Lloyd D.M."/>
            <person name="Loulseged H."/>
            <person name="Loveland J.E."/>
            <person name="Lovell J.D."/>
            <person name="Lozado R."/>
            <person name="Lu J."/>
            <person name="Lyne R."/>
            <person name="Ma J."/>
            <person name="Maheshwari M."/>
            <person name="Matthews L.H."/>
            <person name="McDowall J."/>
            <person name="McLaren S."/>
            <person name="McMurray A."/>
            <person name="Meidl P."/>
            <person name="Meitinger T."/>
            <person name="Milne S."/>
            <person name="Miner G."/>
            <person name="Mistry S.L."/>
            <person name="Morgan M."/>
            <person name="Morris S."/>
            <person name="Mueller I."/>
            <person name="Mullikin J.C."/>
            <person name="Nguyen N."/>
            <person name="Nordsiek G."/>
            <person name="Nyakatura G."/>
            <person name="O'dell C.N."/>
            <person name="Okwuonu G."/>
            <person name="Palmer S."/>
            <person name="Pandian R."/>
            <person name="Parker D."/>
            <person name="Parrish J."/>
            <person name="Pasternak S."/>
            <person name="Patel D."/>
            <person name="Pearce A.V."/>
            <person name="Pearson D.M."/>
            <person name="Pelan S.E."/>
            <person name="Perez L."/>
            <person name="Porter K.M."/>
            <person name="Ramsey Y."/>
            <person name="Reichwald K."/>
            <person name="Rhodes S."/>
            <person name="Ridler K.A."/>
            <person name="Schlessinger D."/>
            <person name="Schueler M.G."/>
            <person name="Sehra H.K."/>
            <person name="Shaw-Smith C."/>
            <person name="Shen H."/>
            <person name="Sheridan E.M."/>
            <person name="Shownkeen R."/>
            <person name="Skuce C.D."/>
            <person name="Smith M.L."/>
            <person name="Sotheran E.C."/>
            <person name="Steingruber H.E."/>
            <person name="Steward C.A."/>
            <person name="Storey R."/>
            <person name="Swann R.M."/>
            <person name="Swarbreck D."/>
            <person name="Tabor P.E."/>
            <person name="Taudien S."/>
            <person name="Taylor T."/>
            <person name="Teague B."/>
            <person name="Thomas K."/>
            <person name="Thorpe A."/>
            <person name="Timms K."/>
            <person name="Tracey A."/>
            <person name="Trevanion S."/>
            <person name="Tromans A.C."/>
            <person name="d'Urso M."/>
            <person name="Verduzco D."/>
            <person name="Villasana D."/>
            <person name="Waldron L."/>
            <person name="Wall M."/>
            <person name="Wang Q."/>
            <person name="Warren J."/>
            <person name="Warry G.L."/>
            <person name="Wei X."/>
            <person name="West A."/>
            <person name="Whitehead S.L."/>
            <person name="Whiteley M.N."/>
            <person name="Wilkinson J.E."/>
            <person name="Willey D.L."/>
            <person name="Williams G."/>
            <person name="Williams L."/>
            <person name="Williamson A."/>
            <person name="Williamson H."/>
            <person name="Wilming L."/>
            <person name="Woodmansey R.L."/>
            <person name="Wray P.W."/>
            <person name="Yen J."/>
            <person name="Zhang J."/>
            <person name="Zhou J."/>
            <person name="Zoghbi H."/>
            <person name="Zorilla S."/>
            <person name="Buck D."/>
            <person name="Reinhardt R."/>
            <person name="Poustka A."/>
            <person name="Rosenthal A."/>
            <person name="Lehrach H."/>
            <person name="Meindl A."/>
            <person name="Minx P.J."/>
            <person name="Hillier L.W."/>
            <person name="Willard H.F."/>
            <person name="Wilson R.K."/>
            <person name="Waterston R.H."/>
            <person name="Rice C.M."/>
            <person name="Vaudin M."/>
            <person name="Coulson A."/>
            <person name="Nelson D.L."/>
            <person name="Weinstock G."/>
            <person name="Sulston J.E."/>
            <person name="Durbin R.M."/>
            <person name="Hubbard T."/>
            <person name="Gibbs R.A."/>
            <person name="Beck S."/>
            <person name="Rogers J."/>
            <person name="Bentley D.R."/>
        </authorList>
    </citation>
    <scope>NUCLEOTIDE SEQUENCE [LARGE SCALE GENOMIC DNA]</scope>
</reference>
<reference key="2">
    <citation type="journal article" date="2008" name="Tissue Antigens">
        <title>An overview of the GAGE cancer/testis antigen family with the inclusion of newly identified members.</title>
        <authorList>
            <person name="Gjerstorff M.F."/>
            <person name="Ditzel H.J."/>
        </authorList>
    </citation>
    <scope>GAGE FAMILY</scope>
</reference>
<comment type="miscellaneous">
    <text>This gene belongs to a multigene family expressed in a large variety of tumors whereas in normal tissues, expression is restricted to germ cells. These genes organized in clustered repeats, have a high degree of predicted sequence identity, but differ by scattered single nucleotide substitution. Their sequences contain either the antigenic peptide YYWPRPRRY or YRPRPRRY which is recognized by cytotoxic T-cells.</text>
</comment>
<comment type="similarity">
    <text evidence="2">Belongs to the GAGE family.</text>
</comment>
<comment type="caution">
    <text evidence="2">The first GAGE nomenclature was based on identified mRNA sequences, but the high identity of the GAGE members made impossible to separate products of paralogous genes from polymorph products. PubMed:18179644 presented a new GAGE gene nomenclature based on the identified genes and their products.</text>
</comment>
<proteinExistence type="inferred from homology"/>
<sequence>MSWRGRSTYYWPRPRRYVEPPEMIGPMRPEQFSDEVEPATPEEGEPATQRQDPAAAQEGEDEGASAGQGPKPEADSQEQGHPQTGCECEDGPDGQEMDPPNPEEVKTPEEGEKQSQC</sequence>